<dbReference type="EMBL" id="CP001074">
    <property type="protein sequence ID" value="ACE90870.1"/>
    <property type="molecule type" value="Genomic_DNA"/>
</dbReference>
<dbReference type="SMR" id="B3PXT4"/>
<dbReference type="KEGG" id="rec:RHECIAT_CH0001903"/>
<dbReference type="eggNOG" id="COG0232">
    <property type="taxonomic scope" value="Bacteria"/>
</dbReference>
<dbReference type="HOGENOM" id="CLU_028163_1_0_5"/>
<dbReference type="Proteomes" id="UP000008817">
    <property type="component" value="Chromosome"/>
</dbReference>
<dbReference type="GO" id="GO:0016793">
    <property type="term" value="F:triphosphoric monoester hydrolase activity"/>
    <property type="evidence" value="ECO:0007669"/>
    <property type="project" value="InterPro"/>
</dbReference>
<dbReference type="CDD" id="cd00077">
    <property type="entry name" value="HDc"/>
    <property type="match status" value="1"/>
</dbReference>
<dbReference type="Gene3D" id="1.10.3210.10">
    <property type="entry name" value="Hypothetical protein af1432"/>
    <property type="match status" value="1"/>
</dbReference>
<dbReference type="HAMAP" id="MF_01212">
    <property type="entry name" value="dGTPase_type2"/>
    <property type="match status" value="1"/>
</dbReference>
<dbReference type="InterPro" id="IPR006261">
    <property type="entry name" value="dGTPase"/>
</dbReference>
<dbReference type="InterPro" id="IPR051094">
    <property type="entry name" value="Diverse_Catalytic_Enzymes"/>
</dbReference>
<dbReference type="InterPro" id="IPR023023">
    <property type="entry name" value="dNTPase_2"/>
</dbReference>
<dbReference type="InterPro" id="IPR003607">
    <property type="entry name" value="HD/PDEase_dom"/>
</dbReference>
<dbReference type="InterPro" id="IPR006674">
    <property type="entry name" value="HD_domain"/>
</dbReference>
<dbReference type="InterPro" id="IPR026875">
    <property type="entry name" value="PHydrolase_assoc_dom"/>
</dbReference>
<dbReference type="NCBIfam" id="TIGR01353">
    <property type="entry name" value="dGTP_triPase"/>
    <property type="match status" value="1"/>
</dbReference>
<dbReference type="NCBIfam" id="NF002326">
    <property type="entry name" value="PRK01286.1-1"/>
    <property type="match status" value="1"/>
</dbReference>
<dbReference type="NCBIfam" id="NF002328">
    <property type="entry name" value="PRK01286.1-3"/>
    <property type="match status" value="1"/>
</dbReference>
<dbReference type="PANTHER" id="PTHR35795:SF1">
    <property type="entry name" value="BIS(5'-NUCLEOSYL)-TETRAPHOSPHATASE, SYMMETRICAL"/>
    <property type="match status" value="1"/>
</dbReference>
<dbReference type="PANTHER" id="PTHR35795">
    <property type="entry name" value="SLR1885 PROTEIN"/>
    <property type="match status" value="1"/>
</dbReference>
<dbReference type="Pfam" id="PF01966">
    <property type="entry name" value="HD"/>
    <property type="match status" value="1"/>
</dbReference>
<dbReference type="Pfam" id="PF13286">
    <property type="entry name" value="HD_assoc"/>
    <property type="match status" value="1"/>
</dbReference>
<dbReference type="SMART" id="SM00471">
    <property type="entry name" value="HDc"/>
    <property type="match status" value="1"/>
</dbReference>
<dbReference type="SUPFAM" id="SSF109604">
    <property type="entry name" value="HD-domain/PDEase-like"/>
    <property type="match status" value="1"/>
</dbReference>
<dbReference type="PROSITE" id="PS51831">
    <property type="entry name" value="HD"/>
    <property type="match status" value="1"/>
</dbReference>
<evidence type="ECO:0000255" key="1">
    <source>
        <dbReference type="HAMAP-Rule" id="MF_01212"/>
    </source>
</evidence>
<evidence type="ECO:0000255" key="2">
    <source>
        <dbReference type="PROSITE-ProRule" id="PRU01175"/>
    </source>
</evidence>
<organism>
    <name type="scientific">Rhizobium etli (strain CIAT 652)</name>
    <dbReference type="NCBI Taxonomy" id="491916"/>
    <lineage>
        <taxon>Bacteria</taxon>
        <taxon>Pseudomonadati</taxon>
        <taxon>Pseudomonadota</taxon>
        <taxon>Alphaproteobacteria</taxon>
        <taxon>Hyphomicrobiales</taxon>
        <taxon>Rhizobiaceae</taxon>
        <taxon>Rhizobium/Agrobacterium group</taxon>
        <taxon>Rhizobium</taxon>
    </lineage>
</organism>
<comment type="similarity">
    <text evidence="1">Belongs to the dGTPase family. Type 2 subfamily.</text>
</comment>
<gene>
    <name type="ordered locus">RHECIAT_CH0001903</name>
</gene>
<reference key="1">
    <citation type="journal article" date="2010" name="Appl. Environ. Microbiol.">
        <title>Conserved symbiotic plasmid DNA sequences in the multireplicon pangenomic structure of Rhizobium etli.</title>
        <authorList>
            <person name="Gonzalez V."/>
            <person name="Acosta J.L."/>
            <person name="Santamaria R.I."/>
            <person name="Bustos P."/>
            <person name="Fernandez J.L."/>
            <person name="Hernandez Gonzalez I.L."/>
            <person name="Diaz R."/>
            <person name="Flores M."/>
            <person name="Palacios R."/>
            <person name="Mora J."/>
            <person name="Davila G."/>
        </authorList>
    </citation>
    <scope>NUCLEOTIDE SEQUENCE [LARGE SCALE GENOMIC DNA]</scope>
    <source>
        <strain>CIAT 652</strain>
    </source>
</reference>
<accession>B3PXT4</accession>
<proteinExistence type="inferred from homology"/>
<keyword id="KW-0378">Hydrolase</keyword>
<feature type="chain" id="PRO_1000138924" description="Deoxyguanosinetriphosphate triphosphohydrolase-like protein">
    <location>
        <begin position="1"/>
        <end position="405"/>
    </location>
</feature>
<feature type="domain" description="HD" evidence="2">
    <location>
        <begin position="75"/>
        <end position="219"/>
    </location>
</feature>
<protein>
    <recommendedName>
        <fullName evidence="1">Deoxyguanosinetriphosphate triphosphohydrolase-like protein</fullName>
    </recommendedName>
</protein>
<name>DGTL1_RHIE6</name>
<sequence length="405" mass="45771">MTIDRRALGFGGSERAVYAADPWTTRGRLYPEDDSPTRSDFQRDRDRIVHTTAFRRLKHKTQVFIAQDGDHYRTRLTHTIEVAQIARALARALKLDEDLAEGVALVHDFGHTPFGHTGEDALHEVLLPYGGFDHNAQSLRIVTKLERRYAEFDGINLTWESLEGLVKHNGPLLTPDGVGTRGPVPQPILDYCELHDLELATYASLEAQVAAIADDIAYNTHDIDDGLRSGYLTFEMLEEIPFLAGLMAEVRARYPHLEPSRFTHEIMRRQITRMVEDVIGVAQQRLSLLRPQSAADIRAADRMIATFSDAMAETDRQIKAMLFKRIYRNPDIMRIRAGAAQIVTDLFGAYMASPKEMQSHYWVDHIAGLADAPKARHVGDYLAGMTDTYAISAHRRLFDHTPDLR</sequence>